<name>RLMN_BUCAI</name>
<protein>
    <recommendedName>
        <fullName evidence="1">Dual-specificity RNA methyltransferase RlmN</fullName>
        <ecNumber evidence="1">2.1.1.192</ecNumber>
    </recommendedName>
    <alternativeName>
        <fullName evidence="1">23S rRNA (adenine(2503)-C(2))-methyltransferase</fullName>
    </alternativeName>
    <alternativeName>
        <fullName evidence="1">23S rRNA m2A2503 methyltransferase</fullName>
    </alternativeName>
    <alternativeName>
        <fullName evidence="1">Ribosomal RNA large subunit methyltransferase N</fullName>
    </alternativeName>
    <alternativeName>
        <fullName evidence="1">tRNA (adenine(37)-C(2))-methyltransferase</fullName>
    </alternativeName>
    <alternativeName>
        <fullName evidence="1">tRNA m2A37 methyltransferase</fullName>
    </alternativeName>
</protein>
<evidence type="ECO:0000255" key="1">
    <source>
        <dbReference type="HAMAP-Rule" id="MF_01849"/>
    </source>
</evidence>
<evidence type="ECO:0000255" key="2">
    <source>
        <dbReference type="PROSITE-ProRule" id="PRU01266"/>
    </source>
</evidence>
<dbReference type="EC" id="2.1.1.192" evidence="1"/>
<dbReference type="EMBL" id="BA000003">
    <property type="protein sequence ID" value="BAB12996.1"/>
    <property type="molecule type" value="Genomic_DNA"/>
</dbReference>
<dbReference type="RefSeq" id="NP_240110.1">
    <property type="nucleotide sequence ID" value="NC_002528.1"/>
</dbReference>
<dbReference type="RefSeq" id="WP_009874240.1">
    <property type="nucleotide sequence ID" value="NC_002528.1"/>
</dbReference>
<dbReference type="SMR" id="P57373"/>
<dbReference type="STRING" id="563178.BUAP5A_281"/>
<dbReference type="EnsemblBacteria" id="BAB12996">
    <property type="protein sequence ID" value="BAB12996"/>
    <property type="gene ID" value="BAB12996"/>
</dbReference>
<dbReference type="KEGG" id="buc:BU286"/>
<dbReference type="PATRIC" id="fig|107806.10.peg.296"/>
<dbReference type="eggNOG" id="COG0820">
    <property type="taxonomic scope" value="Bacteria"/>
</dbReference>
<dbReference type="HOGENOM" id="CLU_029101_0_0_6"/>
<dbReference type="Proteomes" id="UP000001806">
    <property type="component" value="Chromosome"/>
</dbReference>
<dbReference type="GO" id="GO:0005737">
    <property type="term" value="C:cytoplasm"/>
    <property type="evidence" value="ECO:0007669"/>
    <property type="project" value="UniProtKB-SubCell"/>
</dbReference>
<dbReference type="GO" id="GO:0051539">
    <property type="term" value="F:4 iron, 4 sulfur cluster binding"/>
    <property type="evidence" value="ECO:0007669"/>
    <property type="project" value="UniProtKB-UniRule"/>
</dbReference>
<dbReference type="GO" id="GO:0046872">
    <property type="term" value="F:metal ion binding"/>
    <property type="evidence" value="ECO:0007669"/>
    <property type="project" value="UniProtKB-KW"/>
</dbReference>
<dbReference type="GO" id="GO:0070040">
    <property type="term" value="F:rRNA (adenine(2503)-C2-)-methyltransferase activity"/>
    <property type="evidence" value="ECO:0007669"/>
    <property type="project" value="UniProtKB-UniRule"/>
</dbReference>
<dbReference type="GO" id="GO:0019843">
    <property type="term" value="F:rRNA binding"/>
    <property type="evidence" value="ECO:0007669"/>
    <property type="project" value="UniProtKB-UniRule"/>
</dbReference>
<dbReference type="GO" id="GO:0002935">
    <property type="term" value="F:tRNA (adenine(37)-C2)-methyltransferase activity"/>
    <property type="evidence" value="ECO:0007669"/>
    <property type="project" value="UniProtKB-UniRule"/>
</dbReference>
<dbReference type="GO" id="GO:0000049">
    <property type="term" value="F:tRNA binding"/>
    <property type="evidence" value="ECO:0007669"/>
    <property type="project" value="UniProtKB-UniRule"/>
</dbReference>
<dbReference type="GO" id="GO:0070475">
    <property type="term" value="P:rRNA base methylation"/>
    <property type="evidence" value="ECO:0007669"/>
    <property type="project" value="UniProtKB-UniRule"/>
</dbReference>
<dbReference type="GO" id="GO:0030488">
    <property type="term" value="P:tRNA methylation"/>
    <property type="evidence" value="ECO:0007669"/>
    <property type="project" value="UniProtKB-UniRule"/>
</dbReference>
<dbReference type="CDD" id="cd01335">
    <property type="entry name" value="Radical_SAM"/>
    <property type="match status" value="1"/>
</dbReference>
<dbReference type="FunFam" id="3.20.20.70:FF:000008">
    <property type="entry name" value="Dual-specificity RNA methyltransferase RlmN"/>
    <property type="match status" value="1"/>
</dbReference>
<dbReference type="Gene3D" id="1.10.150.530">
    <property type="match status" value="1"/>
</dbReference>
<dbReference type="Gene3D" id="3.20.20.70">
    <property type="entry name" value="Aldolase class I"/>
    <property type="match status" value="1"/>
</dbReference>
<dbReference type="HAMAP" id="MF_01849">
    <property type="entry name" value="RNA_methyltr_RlmN"/>
    <property type="match status" value="1"/>
</dbReference>
<dbReference type="InterPro" id="IPR013785">
    <property type="entry name" value="Aldolase_TIM"/>
</dbReference>
<dbReference type="InterPro" id="IPR040072">
    <property type="entry name" value="Methyltransferase_A"/>
</dbReference>
<dbReference type="InterPro" id="IPR048641">
    <property type="entry name" value="RlmN_N"/>
</dbReference>
<dbReference type="InterPro" id="IPR027492">
    <property type="entry name" value="RNA_MTrfase_RlmN"/>
</dbReference>
<dbReference type="InterPro" id="IPR004383">
    <property type="entry name" value="rRNA_lsu_MTrfase_RlmN/Cfr"/>
</dbReference>
<dbReference type="InterPro" id="IPR007197">
    <property type="entry name" value="rSAM"/>
</dbReference>
<dbReference type="NCBIfam" id="TIGR00048">
    <property type="entry name" value="rRNA_mod_RlmN"/>
    <property type="match status" value="1"/>
</dbReference>
<dbReference type="PANTHER" id="PTHR30544">
    <property type="entry name" value="23S RRNA METHYLTRANSFERASE"/>
    <property type="match status" value="1"/>
</dbReference>
<dbReference type="PANTHER" id="PTHR30544:SF5">
    <property type="entry name" value="RADICAL SAM CORE DOMAIN-CONTAINING PROTEIN"/>
    <property type="match status" value="1"/>
</dbReference>
<dbReference type="Pfam" id="PF04055">
    <property type="entry name" value="Radical_SAM"/>
    <property type="match status" value="1"/>
</dbReference>
<dbReference type="Pfam" id="PF21016">
    <property type="entry name" value="RlmN_N"/>
    <property type="match status" value="1"/>
</dbReference>
<dbReference type="PIRSF" id="PIRSF006004">
    <property type="entry name" value="CHP00048"/>
    <property type="match status" value="1"/>
</dbReference>
<dbReference type="SFLD" id="SFLDF00275">
    <property type="entry name" value="adenosine_C2_methyltransferase"/>
    <property type="match status" value="1"/>
</dbReference>
<dbReference type="SFLD" id="SFLDG01062">
    <property type="entry name" value="methyltransferase_(Class_A)"/>
    <property type="match status" value="1"/>
</dbReference>
<dbReference type="SUPFAM" id="SSF102114">
    <property type="entry name" value="Radical SAM enzymes"/>
    <property type="match status" value="1"/>
</dbReference>
<dbReference type="PROSITE" id="PS51918">
    <property type="entry name" value="RADICAL_SAM"/>
    <property type="match status" value="1"/>
</dbReference>
<feature type="chain" id="PRO_0000171922" description="Dual-specificity RNA methyltransferase RlmN">
    <location>
        <begin position="1"/>
        <end position="363"/>
    </location>
</feature>
<feature type="domain" description="Radical SAM core" evidence="2">
    <location>
        <begin position="108"/>
        <end position="344"/>
    </location>
</feature>
<feature type="active site" description="Proton acceptor" evidence="1">
    <location>
        <position position="102"/>
    </location>
</feature>
<feature type="active site" description="S-methylcysteine intermediate" evidence="1">
    <location>
        <position position="350"/>
    </location>
</feature>
<feature type="binding site" evidence="1">
    <location>
        <position position="122"/>
    </location>
    <ligand>
        <name>[4Fe-4S] cluster</name>
        <dbReference type="ChEBI" id="CHEBI:49883"/>
        <note>4Fe-4S-S-AdoMet</note>
    </ligand>
</feature>
<feature type="binding site" evidence="1">
    <location>
        <position position="126"/>
    </location>
    <ligand>
        <name>[4Fe-4S] cluster</name>
        <dbReference type="ChEBI" id="CHEBI:49883"/>
        <note>4Fe-4S-S-AdoMet</note>
    </ligand>
</feature>
<feature type="binding site" evidence="1">
    <location>
        <position position="129"/>
    </location>
    <ligand>
        <name>[4Fe-4S] cluster</name>
        <dbReference type="ChEBI" id="CHEBI:49883"/>
        <note>4Fe-4S-S-AdoMet</note>
    </ligand>
</feature>
<feature type="binding site" evidence="1">
    <location>
        <begin position="174"/>
        <end position="175"/>
    </location>
    <ligand>
        <name>S-adenosyl-L-methionine</name>
        <dbReference type="ChEBI" id="CHEBI:59789"/>
    </ligand>
</feature>
<feature type="binding site" evidence="1">
    <location>
        <position position="206"/>
    </location>
    <ligand>
        <name>S-adenosyl-L-methionine</name>
        <dbReference type="ChEBI" id="CHEBI:59789"/>
    </ligand>
</feature>
<feature type="binding site" evidence="1">
    <location>
        <begin position="228"/>
        <end position="230"/>
    </location>
    <ligand>
        <name>S-adenosyl-L-methionine</name>
        <dbReference type="ChEBI" id="CHEBI:59789"/>
    </ligand>
</feature>
<feature type="binding site" evidence="1">
    <location>
        <position position="307"/>
    </location>
    <ligand>
        <name>S-adenosyl-L-methionine</name>
        <dbReference type="ChEBI" id="CHEBI:59789"/>
    </ligand>
</feature>
<feature type="disulfide bond" description="(transient)" evidence="1">
    <location>
        <begin position="115"/>
        <end position="350"/>
    </location>
</feature>
<sequence>MNNHIDIFNIPISKINLLDLNRQNLKYFLISLGAKNFCTEQVMSWIYNYYCDDFNKMLNISIKTRKKLYEKSYIFASEFIEEKISYDGTIKWITDINNQKIETVYMPEKKRSTLCVSSQIGCSLKCHFCATGQEGFQRNLKVSEIIAQIWQANKRLKEKNIKKNITNIVFMGMGEPLLNLKNVVSALTIILDEYGFGLSKRRVTLSTSGIVPALDKLRNMIDVSLAISLHAPNDFIRNIIMPINRKYNISSVLSSALKYFKYSNANRGGITIEYVMLDRINDSNENARQLSVLLSKIPSKINLIPWNSFSGPSFLCSNTDRINMFANILRKKGFTTTIRKNRGEDINAACGQLTGIITNYFKK</sequence>
<reference key="1">
    <citation type="journal article" date="2000" name="Nature">
        <title>Genome sequence of the endocellular bacterial symbiont of aphids Buchnera sp. APS.</title>
        <authorList>
            <person name="Shigenobu S."/>
            <person name="Watanabe H."/>
            <person name="Hattori M."/>
            <person name="Sakaki Y."/>
            <person name="Ishikawa H."/>
        </authorList>
    </citation>
    <scope>NUCLEOTIDE SEQUENCE [LARGE SCALE GENOMIC DNA]</scope>
    <source>
        <strain>APS</strain>
    </source>
</reference>
<proteinExistence type="inferred from homology"/>
<accession>P57373</accession>
<comment type="function">
    <text evidence="1">Specifically methylates position 2 of adenine 2503 in 23S rRNA and position 2 of adenine 37 in tRNAs. m2A2503 modification seems to play a crucial role in the proofreading step occurring at the peptidyl transferase center and thus would serve to optimize ribosomal fidelity.</text>
</comment>
<comment type="catalytic activity">
    <reaction evidence="1">
        <text>adenosine(2503) in 23S rRNA + 2 reduced [2Fe-2S]-[ferredoxin] + 2 S-adenosyl-L-methionine = 2-methyladenosine(2503) in 23S rRNA + 5'-deoxyadenosine + L-methionine + 2 oxidized [2Fe-2S]-[ferredoxin] + S-adenosyl-L-homocysteine</text>
        <dbReference type="Rhea" id="RHEA:42916"/>
        <dbReference type="Rhea" id="RHEA-COMP:10000"/>
        <dbReference type="Rhea" id="RHEA-COMP:10001"/>
        <dbReference type="Rhea" id="RHEA-COMP:10152"/>
        <dbReference type="Rhea" id="RHEA-COMP:10282"/>
        <dbReference type="ChEBI" id="CHEBI:17319"/>
        <dbReference type="ChEBI" id="CHEBI:33737"/>
        <dbReference type="ChEBI" id="CHEBI:33738"/>
        <dbReference type="ChEBI" id="CHEBI:57844"/>
        <dbReference type="ChEBI" id="CHEBI:57856"/>
        <dbReference type="ChEBI" id="CHEBI:59789"/>
        <dbReference type="ChEBI" id="CHEBI:74411"/>
        <dbReference type="ChEBI" id="CHEBI:74497"/>
        <dbReference type="EC" id="2.1.1.192"/>
    </reaction>
</comment>
<comment type="catalytic activity">
    <reaction evidence="1">
        <text>adenosine(37) in tRNA + 2 reduced [2Fe-2S]-[ferredoxin] + 2 S-adenosyl-L-methionine = 2-methyladenosine(37) in tRNA + 5'-deoxyadenosine + L-methionine + 2 oxidized [2Fe-2S]-[ferredoxin] + S-adenosyl-L-homocysteine</text>
        <dbReference type="Rhea" id="RHEA:43332"/>
        <dbReference type="Rhea" id="RHEA-COMP:10000"/>
        <dbReference type="Rhea" id="RHEA-COMP:10001"/>
        <dbReference type="Rhea" id="RHEA-COMP:10162"/>
        <dbReference type="Rhea" id="RHEA-COMP:10485"/>
        <dbReference type="ChEBI" id="CHEBI:17319"/>
        <dbReference type="ChEBI" id="CHEBI:33737"/>
        <dbReference type="ChEBI" id="CHEBI:33738"/>
        <dbReference type="ChEBI" id="CHEBI:57844"/>
        <dbReference type="ChEBI" id="CHEBI:57856"/>
        <dbReference type="ChEBI" id="CHEBI:59789"/>
        <dbReference type="ChEBI" id="CHEBI:74411"/>
        <dbReference type="ChEBI" id="CHEBI:74497"/>
        <dbReference type="EC" id="2.1.1.192"/>
    </reaction>
</comment>
<comment type="cofactor">
    <cofactor evidence="1">
        <name>[4Fe-4S] cluster</name>
        <dbReference type="ChEBI" id="CHEBI:49883"/>
    </cofactor>
    <text evidence="1">Binds 1 [4Fe-4S] cluster. The cluster is coordinated with 3 cysteines and an exchangeable S-adenosyl-L-methionine.</text>
</comment>
<comment type="subcellular location">
    <subcellularLocation>
        <location evidence="1">Cytoplasm</location>
    </subcellularLocation>
</comment>
<comment type="miscellaneous">
    <text evidence="1">Reaction proceeds by a ping-pong mechanism involving intermediate methylation of a conserved cysteine residue.</text>
</comment>
<comment type="similarity">
    <text evidence="1">Belongs to the radical SAM superfamily. RlmN family.</text>
</comment>
<organism>
    <name type="scientific">Buchnera aphidicola subsp. Acyrthosiphon pisum (strain APS)</name>
    <name type="common">Acyrthosiphon pisum symbiotic bacterium</name>
    <dbReference type="NCBI Taxonomy" id="107806"/>
    <lineage>
        <taxon>Bacteria</taxon>
        <taxon>Pseudomonadati</taxon>
        <taxon>Pseudomonadota</taxon>
        <taxon>Gammaproteobacteria</taxon>
        <taxon>Enterobacterales</taxon>
        <taxon>Erwiniaceae</taxon>
        <taxon>Buchnera</taxon>
    </lineage>
</organism>
<keyword id="KW-0004">4Fe-4S</keyword>
<keyword id="KW-0963">Cytoplasm</keyword>
<keyword id="KW-1015">Disulfide bond</keyword>
<keyword id="KW-0408">Iron</keyword>
<keyword id="KW-0411">Iron-sulfur</keyword>
<keyword id="KW-0479">Metal-binding</keyword>
<keyword id="KW-0489">Methyltransferase</keyword>
<keyword id="KW-1185">Reference proteome</keyword>
<keyword id="KW-0698">rRNA processing</keyword>
<keyword id="KW-0949">S-adenosyl-L-methionine</keyword>
<keyword id="KW-0808">Transferase</keyword>
<keyword id="KW-0819">tRNA processing</keyword>
<gene>
    <name evidence="1" type="primary">rlmN</name>
    <name type="ordered locus">BU286</name>
</gene>